<organism>
    <name type="scientific">Wolinella succinogenes (strain ATCC 29543 / DSM 1740 / CCUG 13145 / JCM 31913 / LMG 7466 / NCTC 11488 / FDC 602W)</name>
    <name type="common">Vibrio succinogenes</name>
    <dbReference type="NCBI Taxonomy" id="273121"/>
    <lineage>
        <taxon>Bacteria</taxon>
        <taxon>Pseudomonadati</taxon>
        <taxon>Campylobacterota</taxon>
        <taxon>Epsilonproteobacteria</taxon>
        <taxon>Campylobacterales</taxon>
        <taxon>Helicobacteraceae</taxon>
        <taxon>Wolinella</taxon>
    </lineage>
</organism>
<evidence type="ECO:0000255" key="1">
    <source>
        <dbReference type="HAMAP-Rule" id="MF_00382"/>
    </source>
</evidence>
<evidence type="ECO:0000305" key="2"/>
<protein>
    <recommendedName>
        <fullName evidence="1">Large ribosomal subunit protein bL20</fullName>
    </recommendedName>
    <alternativeName>
        <fullName evidence="2">50S ribosomal protein L20</fullName>
    </alternativeName>
</protein>
<proteinExistence type="inferred from homology"/>
<sequence length="117" mass="13971">MPRVKTGTVRRQRHKKVLKLARGFYSGRRKHFRKAKEQLERSMYYAFRDRKQKKRDFRSLWITRINAACRINEISYSRFMHGLKLANIELDRKILADMAMNEPANFAKIVEAAKKAL</sequence>
<dbReference type="EMBL" id="BX571659">
    <property type="protein sequence ID" value="CAE09936.1"/>
    <property type="molecule type" value="Genomic_DNA"/>
</dbReference>
<dbReference type="RefSeq" id="WP_011138733.1">
    <property type="nucleotide sequence ID" value="NC_005090.1"/>
</dbReference>
<dbReference type="SMR" id="Q7M9L7"/>
<dbReference type="STRING" id="273121.WS0823"/>
<dbReference type="KEGG" id="wsu:WS0823"/>
<dbReference type="eggNOG" id="COG0292">
    <property type="taxonomic scope" value="Bacteria"/>
</dbReference>
<dbReference type="HOGENOM" id="CLU_123265_0_1_7"/>
<dbReference type="Proteomes" id="UP000000422">
    <property type="component" value="Chromosome"/>
</dbReference>
<dbReference type="GO" id="GO:1990904">
    <property type="term" value="C:ribonucleoprotein complex"/>
    <property type="evidence" value="ECO:0007669"/>
    <property type="project" value="UniProtKB-KW"/>
</dbReference>
<dbReference type="GO" id="GO:0005840">
    <property type="term" value="C:ribosome"/>
    <property type="evidence" value="ECO:0007669"/>
    <property type="project" value="UniProtKB-KW"/>
</dbReference>
<dbReference type="GO" id="GO:0019843">
    <property type="term" value="F:rRNA binding"/>
    <property type="evidence" value="ECO:0007669"/>
    <property type="project" value="UniProtKB-UniRule"/>
</dbReference>
<dbReference type="GO" id="GO:0003735">
    <property type="term" value="F:structural constituent of ribosome"/>
    <property type="evidence" value="ECO:0007669"/>
    <property type="project" value="InterPro"/>
</dbReference>
<dbReference type="GO" id="GO:0000027">
    <property type="term" value="P:ribosomal large subunit assembly"/>
    <property type="evidence" value="ECO:0007669"/>
    <property type="project" value="UniProtKB-UniRule"/>
</dbReference>
<dbReference type="GO" id="GO:0006412">
    <property type="term" value="P:translation"/>
    <property type="evidence" value="ECO:0007669"/>
    <property type="project" value="InterPro"/>
</dbReference>
<dbReference type="CDD" id="cd07026">
    <property type="entry name" value="Ribosomal_L20"/>
    <property type="match status" value="1"/>
</dbReference>
<dbReference type="FunFam" id="1.10.1900.20:FF:000001">
    <property type="entry name" value="50S ribosomal protein L20"/>
    <property type="match status" value="1"/>
</dbReference>
<dbReference type="Gene3D" id="6.10.160.10">
    <property type="match status" value="1"/>
</dbReference>
<dbReference type="Gene3D" id="1.10.1900.20">
    <property type="entry name" value="Ribosomal protein L20"/>
    <property type="match status" value="1"/>
</dbReference>
<dbReference type="HAMAP" id="MF_00382">
    <property type="entry name" value="Ribosomal_bL20"/>
    <property type="match status" value="1"/>
</dbReference>
<dbReference type="InterPro" id="IPR005813">
    <property type="entry name" value="Ribosomal_bL20"/>
</dbReference>
<dbReference type="InterPro" id="IPR049946">
    <property type="entry name" value="RIBOSOMAL_L20_CS"/>
</dbReference>
<dbReference type="InterPro" id="IPR035566">
    <property type="entry name" value="Ribosomal_protein_bL20_C"/>
</dbReference>
<dbReference type="NCBIfam" id="TIGR01032">
    <property type="entry name" value="rplT_bact"/>
    <property type="match status" value="1"/>
</dbReference>
<dbReference type="PANTHER" id="PTHR10986">
    <property type="entry name" value="39S RIBOSOMAL PROTEIN L20"/>
    <property type="match status" value="1"/>
</dbReference>
<dbReference type="Pfam" id="PF00453">
    <property type="entry name" value="Ribosomal_L20"/>
    <property type="match status" value="1"/>
</dbReference>
<dbReference type="PRINTS" id="PR00062">
    <property type="entry name" value="RIBOSOMALL20"/>
</dbReference>
<dbReference type="SUPFAM" id="SSF74731">
    <property type="entry name" value="Ribosomal protein L20"/>
    <property type="match status" value="1"/>
</dbReference>
<dbReference type="PROSITE" id="PS00937">
    <property type="entry name" value="RIBOSOMAL_L20"/>
    <property type="match status" value="1"/>
</dbReference>
<keyword id="KW-1185">Reference proteome</keyword>
<keyword id="KW-0687">Ribonucleoprotein</keyword>
<keyword id="KW-0689">Ribosomal protein</keyword>
<keyword id="KW-0694">RNA-binding</keyword>
<keyword id="KW-0699">rRNA-binding</keyword>
<reference key="1">
    <citation type="journal article" date="2003" name="Proc. Natl. Acad. Sci. U.S.A.">
        <title>Complete genome sequence and analysis of Wolinella succinogenes.</title>
        <authorList>
            <person name="Baar C."/>
            <person name="Eppinger M."/>
            <person name="Raddatz G."/>
            <person name="Simon J."/>
            <person name="Lanz C."/>
            <person name="Klimmek O."/>
            <person name="Nandakumar R."/>
            <person name="Gross R."/>
            <person name="Rosinus A."/>
            <person name="Keller H."/>
            <person name="Jagtap P."/>
            <person name="Linke B."/>
            <person name="Meyer F."/>
            <person name="Lederer H."/>
            <person name="Schuster S.C."/>
        </authorList>
    </citation>
    <scope>NUCLEOTIDE SEQUENCE [LARGE SCALE GENOMIC DNA]</scope>
    <source>
        <strain>ATCC 29543 / DSM 1740 / CCUG 13145 / JCM 31913 / LMG 7466 / NCTC 11488 / FDC 602W</strain>
    </source>
</reference>
<gene>
    <name evidence="1" type="primary">rplT</name>
    <name type="ordered locus">WS0823</name>
</gene>
<comment type="function">
    <text evidence="1">Binds directly to 23S ribosomal RNA and is necessary for the in vitro assembly process of the 50S ribosomal subunit. It is not involved in the protein synthesizing functions of that subunit.</text>
</comment>
<comment type="similarity">
    <text evidence="1">Belongs to the bacterial ribosomal protein bL20 family.</text>
</comment>
<accession>Q7M9L7</accession>
<name>RL20_WOLSU</name>
<feature type="chain" id="PRO_0000177266" description="Large ribosomal subunit protein bL20">
    <location>
        <begin position="1"/>
        <end position="117"/>
    </location>
</feature>